<keyword id="KW-1185">Reference proteome</keyword>
<protein>
    <recommendedName>
        <fullName>Uncharacterized protein C20L</fullName>
    </recommendedName>
</protein>
<reference key="1">
    <citation type="journal article" date="1990" name="Virology">
        <title>The complete DNA sequence of vaccinia virus.</title>
        <authorList>
            <person name="Goebel S.J."/>
            <person name="Johnson G.P."/>
            <person name="Perkus M.E."/>
            <person name="Davis S.W."/>
            <person name="Winslow J.P."/>
            <person name="Paoletti E."/>
        </authorList>
    </citation>
    <scope>NUCLEOTIDE SEQUENCE [LARGE SCALE GENOMIC DNA]</scope>
</reference>
<organismHost>
    <name type="scientific">Homo sapiens</name>
    <name type="common">Human</name>
    <dbReference type="NCBI Taxonomy" id="9606"/>
</organismHost>
<organism>
    <name type="scientific">Vaccinia virus (strain Copenhagen)</name>
    <name type="common">VACV</name>
    <dbReference type="NCBI Taxonomy" id="10249"/>
    <lineage>
        <taxon>Viruses</taxon>
        <taxon>Varidnaviria</taxon>
        <taxon>Bamfordvirae</taxon>
        <taxon>Nucleocytoviricota</taxon>
        <taxon>Pokkesviricetes</taxon>
        <taxon>Chitovirales</taxon>
        <taxon>Poxviridae</taxon>
        <taxon>Chordopoxvirinae</taxon>
        <taxon>Orthopoxvirus</taxon>
        <taxon>Vaccinia virus</taxon>
    </lineage>
</organism>
<feature type="chain" id="PRO_0000099420" description="Uncharacterized protein C20L">
    <location>
        <begin position="1"/>
        <end position="103"/>
    </location>
</feature>
<gene>
    <name type="ORF">B26R</name>
</gene>
<gene>
    <name type="ORF">C20L</name>
</gene>
<accession>P21104</accession>
<sequence length="103" mass="12488">MEQTLTRLHTYLQQYTKHSPRVVYALLSRGYVIILIVHPSWNDCATGHILIMLLNWHEQKEEGQHLLYLFIKHNQGYTLNILRYLLDRFDIQKDEYIYRLSKL</sequence>
<name>C20L_VACCC</name>
<proteinExistence type="predicted"/>
<dbReference type="EMBL" id="M35027">
    <property type="protein sequence ID" value="AAA48226.1"/>
    <property type="molecule type" value="Genomic_DNA"/>
</dbReference>
<dbReference type="EMBL" id="M35027">
    <property type="protein sequence ID" value="AAA47975.1"/>
    <property type="molecule type" value="Genomic_DNA"/>
</dbReference>
<dbReference type="PIR" id="G42528">
    <property type="entry name" value="G42528"/>
</dbReference>
<dbReference type="SMR" id="P21104"/>
<dbReference type="Proteomes" id="UP000008269">
    <property type="component" value="Segment"/>
</dbReference>